<organism>
    <name type="scientific">Gallus gallus</name>
    <name type="common">Chicken</name>
    <dbReference type="NCBI Taxonomy" id="9031"/>
    <lineage>
        <taxon>Eukaryota</taxon>
        <taxon>Metazoa</taxon>
        <taxon>Chordata</taxon>
        <taxon>Craniata</taxon>
        <taxon>Vertebrata</taxon>
        <taxon>Euteleostomi</taxon>
        <taxon>Archelosauria</taxon>
        <taxon>Archosauria</taxon>
        <taxon>Dinosauria</taxon>
        <taxon>Saurischia</taxon>
        <taxon>Theropoda</taxon>
        <taxon>Coelurosauria</taxon>
        <taxon>Aves</taxon>
        <taxon>Neognathae</taxon>
        <taxon>Galloanserae</taxon>
        <taxon>Galliformes</taxon>
        <taxon>Phasianidae</taxon>
        <taxon>Phasianinae</taxon>
        <taxon>Gallus</taxon>
    </lineage>
</organism>
<sequence length="314" mass="34677">MVFRSPLELYPTHFFLPNFAADPHHRSLLLASGGSGSGSGCSPGAGGGGGSSRAPHEELSMFQLPTLNFSPEQVASVCETLEETGDIERLGRFLWSLPVAPGACEAINKHESILRARAVVAFHTGNFRDLYHILENHKFTKESHGKLQAMWLEAHYQEAEKLRGRPLGPVDKYRVRKKFPLPRTIWDGEQKTHCFKERTRSLLREWYLQDPYPNPSKKRELAQATGLTPTQVGNWFKNRRQRDRAAAAKNRLQHQAIGQSGMRSLAEPGCPTHSSAESPSTAASPTTSVSSLTERAETGTSILSVTSSDSECDV</sequence>
<feature type="chain" id="PRO_0000049301" description="Homeobox protein SIX3">
    <location>
        <begin position="1"/>
        <end position="314"/>
    </location>
</feature>
<feature type="DNA-binding region" description="Homeobox" evidence="3">
    <location>
        <begin position="188"/>
        <end position="247"/>
    </location>
</feature>
<feature type="region of interest" description="Disordered" evidence="4">
    <location>
        <begin position="214"/>
        <end position="233"/>
    </location>
</feature>
<feature type="region of interest" description="Disordered" evidence="4">
    <location>
        <begin position="240"/>
        <end position="314"/>
    </location>
</feature>
<feature type="compositionally biased region" description="Low complexity" evidence="4">
    <location>
        <begin position="271"/>
        <end position="293"/>
    </location>
</feature>
<feature type="compositionally biased region" description="Polar residues" evidence="4">
    <location>
        <begin position="298"/>
        <end position="314"/>
    </location>
</feature>
<keyword id="KW-0217">Developmental protein</keyword>
<keyword id="KW-0238">DNA-binding</keyword>
<keyword id="KW-0371">Homeobox</keyword>
<keyword id="KW-0539">Nucleus</keyword>
<keyword id="KW-1185">Reference proteome</keyword>
<keyword id="KW-0678">Repressor</keyword>
<keyword id="KW-0804">Transcription</keyword>
<keyword id="KW-0805">Transcription regulation</keyword>
<protein>
    <recommendedName>
        <fullName>Homeobox protein SIX3</fullName>
    </recommendedName>
    <alternativeName>
        <fullName>CSIX3</fullName>
    </alternativeName>
    <alternativeName>
        <fullName>Sine oculis homeobox homolog 3</fullName>
    </alternativeName>
</protein>
<accession>O42406</accession>
<accession>Q53Z11</accession>
<dbReference type="EMBL" id="Y15106">
    <property type="protein sequence ID" value="CAA75380.1"/>
    <property type="molecule type" value="mRNA"/>
</dbReference>
<dbReference type="EMBL" id="AY373324">
    <property type="protein sequence ID" value="AAQ76043.1"/>
    <property type="molecule type" value="mRNA"/>
</dbReference>
<dbReference type="RefSeq" id="NP_989695.1">
    <property type="nucleotide sequence ID" value="NM_204364.2"/>
</dbReference>
<dbReference type="BMRB" id="O42406"/>
<dbReference type="SMR" id="O42406"/>
<dbReference type="FunCoup" id="O42406">
    <property type="interactions" value="8"/>
</dbReference>
<dbReference type="STRING" id="9031.ENSGALP00000058342"/>
<dbReference type="GeneID" id="378786"/>
<dbReference type="KEGG" id="gga:378786"/>
<dbReference type="CTD" id="6496"/>
<dbReference type="VEuPathDB" id="HostDB:geneid_378786"/>
<dbReference type="InParanoid" id="O42406"/>
<dbReference type="OMA" id="PGCPTHN"/>
<dbReference type="OrthoDB" id="3501850at2759"/>
<dbReference type="PhylomeDB" id="O42406"/>
<dbReference type="PRO" id="PR:O42406"/>
<dbReference type="Proteomes" id="UP000000539">
    <property type="component" value="Chromosome 3"/>
</dbReference>
<dbReference type="Bgee" id="ENSGALG00000032259">
    <property type="expression patterns" value="Expressed in brain"/>
</dbReference>
<dbReference type="GO" id="GO:0005634">
    <property type="term" value="C:nucleus"/>
    <property type="evidence" value="ECO:0000250"/>
    <property type="project" value="AgBase"/>
</dbReference>
<dbReference type="GO" id="GO:0005667">
    <property type="term" value="C:transcription regulator complex"/>
    <property type="evidence" value="ECO:0000318"/>
    <property type="project" value="GO_Central"/>
</dbReference>
<dbReference type="GO" id="GO:0003677">
    <property type="term" value="F:DNA binding"/>
    <property type="evidence" value="ECO:0000250"/>
    <property type="project" value="AgBase"/>
</dbReference>
<dbReference type="GO" id="GO:0001228">
    <property type="term" value="F:DNA-binding transcription activator activity, RNA polymerase II-specific"/>
    <property type="evidence" value="ECO:0000250"/>
    <property type="project" value="UniProtKB"/>
</dbReference>
<dbReference type="GO" id="GO:0000981">
    <property type="term" value="F:DNA-binding transcription factor activity, RNA polymerase II-specific"/>
    <property type="evidence" value="ECO:0000250"/>
    <property type="project" value="AgBase"/>
</dbReference>
<dbReference type="GO" id="GO:0000978">
    <property type="term" value="F:RNA polymerase II cis-regulatory region sequence-specific DNA binding"/>
    <property type="evidence" value="ECO:0000318"/>
    <property type="project" value="GO_Central"/>
</dbReference>
<dbReference type="GO" id="GO:1902742">
    <property type="term" value="P:apoptotic process involved in development"/>
    <property type="evidence" value="ECO:0000250"/>
    <property type="project" value="UniProtKB"/>
</dbReference>
<dbReference type="GO" id="GO:0007420">
    <property type="term" value="P:brain development"/>
    <property type="evidence" value="ECO:0000250"/>
    <property type="project" value="AgBase"/>
</dbReference>
<dbReference type="GO" id="GO:0021846">
    <property type="term" value="P:cell proliferation in forebrain"/>
    <property type="evidence" value="ECO:0000250"/>
    <property type="project" value="UniProtKB"/>
</dbReference>
<dbReference type="GO" id="GO:0002070">
    <property type="term" value="P:epithelial cell maturation"/>
    <property type="evidence" value="ECO:0000250"/>
    <property type="project" value="UniProtKB"/>
</dbReference>
<dbReference type="GO" id="GO:0001654">
    <property type="term" value="P:eye development"/>
    <property type="evidence" value="ECO:0000250"/>
    <property type="project" value="UniProtKB"/>
</dbReference>
<dbReference type="GO" id="GO:0021798">
    <property type="term" value="P:forebrain dorsal/ventral pattern formation"/>
    <property type="evidence" value="ECO:0000250"/>
    <property type="project" value="UniProtKB"/>
</dbReference>
<dbReference type="GO" id="GO:0002088">
    <property type="term" value="P:lens development in camera-type eye"/>
    <property type="evidence" value="ECO:0000250"/>
    <property type="project" value="UniProtKB"/>
</dbReference>
<dbReference type="GO" id="GO:1990086">
    <property type="term" value="P:lens fiber cell apoptotic process"/>
    <property type="evidence" value="ECO:0000250"/>
    <property type="project" value="UniProtKB"/>
</dbReference>
<dbReference type="GO" id="GO:0070306">
    <property type="term" value="P:lens fiber cell differentiation"/>
    <property type="evidence" value="ECO:0000250"/>
    <property type="project" value="UniProtKB"/>
</dbReference>
<dbReference type="GO" id="GO:0045892">
    <property type="term" value="P:negative regulation of DNA-templated transcription"/>
    <property type="evidence" value="ECO:0000250"/>
    <property type="project" value="UniProtKB"/>
</dbReference>
<dbReference type="GO" id="GO:0045665">
    <property type="term" value="P:negative regulation of neuron differentiation"/>
    <property type="evidence" value="ECO:0000250"/>
    <property type="project" value="UniProtKB"/>
</dbReference>
<dbReference type="GO" id="GO:0030178">
    <property type="term" value="P:negative regulation of Wnt signaling pathway"/>
    <property type="evidence" value="ECO:0000250"/>
    <property type="project" value="AgBase"/>
</dbReference>
<dbReference type="GO" id="GO:0014016">
    <property type="term" value="P:neuroblast differentiation"/>
    <property type="evidence" value="ECO:0000250"/>
    <property type="project" value="UniProtKB"/>
</dbReference>
<dbReference type="GO" id="GO:0097402">
    <property type="term" value="P:neuroblast migration"/>
    <property type="evidence" value="ECO:0000250"/>
    <property type="project" value="UniProtKB"/>
</dbReference>
<dbReference type="GO" id="GO:0003404">
    <property type="term" value="P:optic vesicle morphogenesis"/>
    <property type="evidence" value="ECO:0000250"/>
    <property type="project" value="UniProtKB"/>
</dbReference>
<dbReference type="GO" id="GO:0021983">
    <property type="term" value="P:pituitary gland development"/>
    <property type="evidence" value="ECO:0000250"/>
    <property type="project" value="UniProtKB"/>
</dbReference>
<dbReference type="GO" id="GO:0009946">
    <property type="term" value="P:proximal/distal axis specification"/>
    <property type="evidence" value="ECO:0000250"/>
    <property type="project" value="UniProtKB"/>
</dbReference>
<dbReference type="GO" id="GO:1901987">
    <property type="term" value="P:regulation of cell cycle phase transition"/>
    <property type="evidence" value="ECO:0000250"/>
    <property type="project" value="UniProtKB"/>
</dbReference>
<dbReference type="GO" id="GO:0042127">
    <property type="term" value="P:regulation of cell population proliferation"/>
    <property type="evidence" value="ECO:0000250"/>
    <property type="project" value="UniProtKB"/>
</dbReference>
<dbReference type="GO" id="GO:2000177">
    <property type="term" value="P:regulation of neural precursor cell proliferation"/>
    <property type="evidence" value="ECO:0000250"/>
    <property type="project" value="UniProtKB"/>
</dbReference>
<dbReference type="GO" id="GO:0061074">
    <property type="term" value="P:regulation of neural retina development"/>
    <property type="evidence" value="ECO:0000250"/>
    <property type="project" value="UniProtKB"/>
</dbReference>
<dbReference type="GO" id="GO:1902692">
    <property type="term" value="P:regulation of neuroblast proliferation"/>
    <property type="evidence" value="ECO:0000250"/>
    <property type="project" value="UniProtKB"/>
</dbReference>
<dbReference type="GO" id="GO:0006357">
    <property type="term" value="P:regulation of transcription by RNA polymerase II"/>
    <property type="evidence" value="ECO:0000318"/>
    <property type="project" value="GO_Central"/>
</dbReference>
<dbReference type="GO" id="GO:0021537">
    <property type="term" value="P:telencephalon development"/>
    <property type="evidence" value="ECO:0000250"/>
    <property type="project" value="UniProtKB"/>
</dbReference>
<dbReference type="GO" id="GO:0021978">
    <property type="term" value="P:telencephalon regionalization"/>
    <property type="evidence" value="ECO:0000250"/>
    <property type="project" value="UniProtKB"/>
</dbReference>
<dbReference type="CDD" id="cd00086">
    <property type="entry name" value="homeodomain"/>
    <property type="match status" value="1"/>
</dbReference>
<dbReference type="FunFam" id="1.10.10.60:FF:000046">
    <property type="entry name" value="SIX homeobox 3"/>
    <property type="match status" value="1"/>
</dbReference>
<dbReference type="Gene3D" id="1.10.10.60">
    <property type="entry name" value="Homeodomain-like"/>
    <property type="match status" value="1"/>
</dbReference>
<dbReference type="InterPro" id="IPR001356">
    <property type="entry name" value="HD"/>
</dbReference>
<dbReference type="InterPro" id="IPR009057">
    <property type="entry name" value="Homeodomain-like_sf"/>
</dbReference>
<dbReference type="InterPro" id="IPR031701">
    <property type="entry name" value="SIX1_SD"/>
</dbReference>
<dbReference type="PANTHER" id="PTHR10390">
    <property type="entry name" value="HOMEOBOX PROTEIN SIX"/>
    <property type="match status" value="1"/>
</dbReference>
<dbReference type="PANTHER" id="PTHR10390:SF31">
    <property type="entry name" value="HOMEOBOX PROTEIN SIX3"/>
    <property type="match status" value="1"/>
</dbReference>
<dbReference type="Pfam" id="PF00046">
    <property type="entry name" value="Homeodomain"/>
    <property type="match status" value="1"/>
</dbReference>
<dbReference type="Pfam" id="PF16878">
    <property type="entry name" value="SIX1_SD"/>
    <property type="match status" value="1"/>
</dbReference>
<dbReference type="SMART" id="SM00389">
    <property type="entry name" value="HOX"/>
    <property type="match status" value="1"/>
</dbReference>
<dbReference type="SUPFAM" id="SSF46689">
    <property type="entry name" value="Homeodomain-like"/>
    <property type="match status" value="1"/>
</dbReference>
<dbReference type="PROSITE" id="PS50071">
    <property type="entry name" value="HOMEOBOX_2"/>
    <property type="match status" value="1"/>
</dbReference>
<comment type="function">
    <text evidence="1 2 5 7">Transcriptional regulator which can act as both a transcriptional repressor and activator by binding a ATTA homeodomain core recognition sequence on these target genes. During forebrain development represses WNT1 expression allowing zona limitans intrathalamica formation and thereby ensuring proper anterio-posterior patterning of the diencephalon and formation of the rostral diencephalon (PubMed:12569128). Acts as a direct upstream activator of SHH expression in the rostral diencephalon ventral midline and that in turn SHH maintains its expression. In addition, Six3 activity is required for the formation of the telencephalon. During postnatal stages of brain development is necessary for ependymal cell maturation by promoting the maturation of radial glia into ependymal cells through regulation of neuroblast proliferation and migration. Acts on the proliferation and differentiation of neural progenitor cells through activating transcription of CCND1 and CCND2. During early lens formation plays a role in lens induction and specification by activating directly PAX6 in the presumptive lens ectoderm. In turn PAX6 activates SIX3 resulting in activation of PDGFRA and CCND1 promoting cell proliferation. Also is required for the neuroretina development by directly suppressing WNT8B expression in the anterior neural plate territory. Its action during retina development and lens morphogenesis is AES and TLE4-dependent manner (PubMed:12050133). Furthermore, during eye development regulates several genes expression. Before and during early lens development represses the CRYGF promoter by binding a SIX repressor element. Directly activates RHO transcription, or cooperates with CRX or NRL. Six3 also functions in the formation of the proximodistal axis of the optic cup, and promotes the formation of optic vesicles-like structures. During pituitary development, acts in parallel or alternatively with HESX1 to control cell proliferation through Wnt/beta-catenin pathway. Plays a role in eye development by suppressing WNT1 expression and in dorsal-ventral patterning by repressing BMP signaling pathway (By similarity).</text>
</comment>
<comment type="subcellular location">
    <subcellularLocation>
        <location evidence="2 3">Nucleus</location>
    </subcellularLocation>
</comment>
<comment type="developmental stage">
    <text evidence="6">First detected in the corneal epithelium and lens epithelium at 6.5 dpc and 12 dpc. At 12 dpc is present in the corneal endothelium and the limbal region. After 16 dpc and at hatching (H1), expression persisted in multiple anterior segment tissues, including the lens epithelium, the corneal endothelium, the iris, and the trabecular meshwork (at protein level).</text>
</comment>
<comment type="similarity">
    <text evidence="8">Belongs to the SIX/Sine oculis homeobox family.</text>
</comment>
<reference key="1">
    <citation type="journal article" date="1998" name="Mech. Dev.">
        <title>Expression pattern of cSix3, a member of the Six/sine oculis family of transcription factors.</title>
        <authorList>
            <person name="Bovolenta P."/>
            <person name="Mallamaci A."/>
            <person name="Puelles L."/>
            <person name="Boncinelli E."/>
        </authorList>
    </citation>
    <scope>NUCLEOTIDE SEQUENCE [MRNA]</scope>
</reference>
<reference key="2">
    <citation type="submission" date="2003-08" db="EMBL/GenBank/DDBJ databases">
        <authorList>
            <person name="Chen A."/>
            <person name="Cepko C.L."/>
        </authorList>
    </citation>
    <scope>NUCLEOTIDE SEQUENCE [MRNA]</scope>
</reference>
<reference key="3">
    <citation type="journal article" date="2002" name="Development">
        <title>Six3-mediated auto repression and eye development requires its interaction with members of the Groucho-related family of co-repressors.</title>
        <authorList>
            <person name="Zhu C.C."/>
            <person name="Dyer M.A."/>
            <person name="Uchikawa M."/>
            <person name="Kondoh H."/>
            <person name="Lagutin O.V."/>
            <person name="Oliver G."/>
        </authorList>
    </citation>
    <scope>FUNCTION</scope>
</reference>
<reference key="4">
    <citation type="journal article" date="2002" name="Dev. Biol.">
        <title>The homeobox gene Six3 is a potential regulator of anterior segment formation in the chick eye.</title>
        <authorList>
            <person name="Hsieh Y.W."/>
            <person name="Zhang X.M."/>
            <person name="Lin E."/>
            <person name="Oliver G."/>
            <person name="Yang X.J."/>
        </authorList>
    </citation>
    <scope>DEVELOPMENTAL STAGE</scope>
</reference>
<reference key="5">
    <citation type="journal article" date="2003" name="Genes Dev.">
        <title>Six3 repression of Wnt signaling in the anterior neuroectoderm is essential for vertebrate forebrain development.</title>
        <authorList>
            <person name="Lagutin O.V."/>
            <person name="Zhu C.C."/>
            <person name="Kobayashi D."/>
            <person name="Topczewski J."/>
            <person name="Shimamura K."/>
            <person name="Puelles L."/>
            <person name="Russell H.R."/>
            <person name="McKinnon P.J."/>
            <person name="Solnica-Krezel L."/>
            <person name="Oliver G."/>
        </authorList>
    </citation>
    <scope>FUNCTION</scope>
</reference>
<proteinExistence type="evidence at protein level"/>
<name>SIX3_CHICK</name>
<evidence type="ECO:0000250" key="1">
    <source>
        <dbReference type="UniProtKB" id="O95343"/>
    </source>
</evidence>
<evidence type="ECO:0000250" key="2">
    <source>
        <dbReference type="UniProtKB" id="Q62233"/>
    </source>
</evidence>
<evidence type="ECO:0000255" key="3">
    <source>
        <dbReference type="PROSITE-ProRule" id="PRU00108"/>
    </source>
</evidence>
<evidence type="ECO:0000256" key="4">
    <source>
        <dbReference type="SAM" id="MobiDB-lite"/>
    </source>
</evidence>
<evidence type="ECO:0000269" key="5">
    <source>
    </source>
</evidence>
<evidence type="ECO:0000269" key="6">
    <source>
    </source>
</evidence>
<evidence type="ECO:0000269" key="7">
    <source>
    </source>
</evidence>
<evidence type="ECO:0000305" key="8"/>
<gene>
    <name type="primary">SIX3</name>
</gene>